<dbReference type="EMBL" id="CP001598">
    <property type="protein sequence ID" value="ACQ46523.1"/>
    <property type="molecule type" value="Genomic_DNA"/>
</dbReference>
<dbReference type="RefSeq" id="WP_000776446.1">
    <property type="nucleotide sequence ID" value="NC_012659.1"/>
</dbReference>
<dbReference type="SMR" id="C3P5L3"/>
<dbReference type="GeneID" id="45023639"/>
<dbReference type="KEGG" id="bai:BAA_3972"/>
<dbReference type="HOGENOM" id="CLU_089475_6_3_9"/>
<dbReference type="GO" id="GO:0005829">
    <property type="term" value="C:cytosol"/>
    <property type="evidence" value="ECO:0007669"/>
    <property type="project" value="TreeGrafter"/>
</dbReference>
<dbReference type="GO" id="GO:0043024">
    <property type="term" value="F:ribosomal small subunit binding"/>
    <property type="evidence" value="ECO:0007669"/>
    <property type="project" value="TreeGrafter"/>
</dbReference>
<dbReference type="GO" id="GO:0030490">
    <property type="term" value="P:maturation of SSU-rRNA"/>
    <property type="evidence" value="ECO:0007669"/>
    <property type="project" value="UniProtKB-UniRule"/>
</dbReference>
<dbReference type="FunFam" id="3.30.300.20:FF:000009">
    <property type="entry name" value="Ribosome-binding factor A"/>
    <property type="match status" value="1"/>
</dbReference>
<dbReference type="Gene3D" id="3.30.300.20">
    <property type="match status" value="1"/>
</dbReference>
<dbReference type="HAMAP" id="MF_00003">
    <property type="entry name" value="RbfA"/>
    <property type="match status" value="1"/>
</dbReference>
<dbReference type="InterPro" id="IPR015946">
    <property type="entry name" value="KH_dom-like_a/b"/>
</dbReference>
<dbReference type="InterPro" id="IPR000238">
    <property type="entry name" value="RbfA"/>
</dbReference>
<dbReference type="InterPro" id="IPR023799">
    <property type="entry name" value="RbfA_dom_sf"/>
</dbReference>
<dbReference type="InterPro" id="IPR020053">
    <property type="entry name" value="Ribosome-bd_factorA_CS"/>
</dbReference>
<dbReference type="NCBIfam" id="TIGR00082">
    <property type="entry name" value="rbfA"/>
    <property type="match status" value="1"/>
</dbReference>
<dbReference type="PANTHER" id="PTHR33515">
    <property type="entry name" value="RIBOSOME-BINDING FACTOR A, CHLOROPLASTIC-RELATED"/>
    <property type="match status" value="1"/>
</dbReference>
<dbReference type="PANTHER" id="PTHR33515:SF1">
    <property type="entry name" value="RIBOSOME-BINDING FACTOR A, CHLOROPLASTIC-RELATED"/>
    <property type="match status" value="1"/>
</dbReference>
<dbReference type="Pfam" id="PF02033">
    <property type="entry name" value="RBFA"/>
    <property type="match status" value="1"/>
</dbReference>
<dbReference type="SUPFAM" id="SSF89919">
    <property type="entry name" value="Ribosome-binding factor A, RbfA"/>
    <property type="match status" value="1"/>
</dbReference>
<dbReference type="PROSITE" id="PS01319">
    <property type="entry name" value="RBFA"/>
    <property type="match status" value="1"/>
</dbReference>
<accession>C3P5L3</accession>
<keyword id="KW-0963">Cytoplasm</keyword>
<keyword id="KW-0690">Ribosome biogenesis</keyword>
<reference key="1">
    <citation type="submission" date="2009-04" db="EMBL/GenBank/DDBJ databases">
        <title>Genome sequence of Bacillus anthracis A0248.</title>
        <authorList>
            <person name="Dodson R.J."/>
            <person name="Munk A.C."/>
            <person name="Bruce D."/>
            <person name="Detter C."/>
            <person name="Tapia R."/>
            <person name="Sutton G."/>
            <person name="Sims D."/>
            <person name="Brettin T."/>
        </authorList>
    </citation>
    <scope>NUCLEOTIDE SEQUENCE [LARGE SCALE GENOMIC DNA]</scope>
    <source>
        <strain>A0248</strain>
    </source>
</reference>
<gene>
    <name evidence="1" type="primary">rbfA</name>
    <name type="ordered locus">BAA_3972</name>
</gene>
<evidence type="ECO:0000255" key="1">
    <source>
        <dbReference type="HAMAP-Rule" id="MF_00003"/>
    </source>
</evidence>
<comment type="function">
    <text evidence="1">One of several proteins that assist in the late maturation steps of the functional core of the 30S ribosomal subunit. Associates with free 30S ribosomal subunits (but not with 30S subunits that are part of 70S ribosomes or polysomes). Required for efficient processing of 16S rRNA. May interact with the 5'-terminal helix region of 16S rRNA.</text>
</comment>
<comment type="subunit">
    <text evidence="1">Monomer. Binds 30S ribosomal subunits, but not 50S ribosomal subunits or 70S ribosomes.</text>
</comment>
<comment type="subcellular location">
    <subcellularLocation>
        <location evidence="1">Cytoplasm</location>
    </subcellularLocation>
</comment>
<comment type="similarity">
    <text evidence="1">Belongs to the RbfA family.</text>
</comment>
<proteinExistence type="inferred from homology"/>
<name>RBFA_BACAA</name>
<sequence length="118" mass="13541">MKLRANRVGEQMKKELGDIISRKIKDPRVGFVTVTDVQVSRDLQIATVYISVLGDEEQKENTLKGLAKAKGFIRSEIGQRIRLRKTPEISFEFDESIGYGHRIDTLLHEINKEGKREE</sequence>
<protein>
    <recommendedName>
        <fullName evidence="1">Ribosome-binding factor A</fullName>
    </recommendedName>
</protein>
<organism>
    <name type="scientific">Bacillus anthracis (strain A0248)</name>
    <dbReference type="NCBI Taxonomy" id="592021"/>
    <lineage>
        <taxon>Bacteria</taxon>
        <taxon>Bacillati</taxon>
        <taxon>Bacillota</taxon>
        <taxon>Bacilli</taxon>
        <taxon>Bacillales</taxon>
        <taxon>Bacillaceae</taxon>
        <taxon>Bacillus</taxon>
        <taxon>Bacillus cereus group</taxon>
    </lineage>
</organism>
<feature type="chain" id="PRO_1000193225" description="Ribosome-binding factor A">
    <location>
        <begin position="1"/>
        <end position="118"/>
    </location>
</feature>